<dbReference type="EMBL" id="CR380959">
    <property type="protein sequence ID" value="CAG62635.1"/>
    <property type="molecule type" value="Genomic_DNA"/>
</dbReference>
<dbReference type="RefSeq" id="XP_449659.1">
    <property type="nucleotide sequence ID" value="XM_449659.1"/>
</dbReference>
<dbReference type="SMR" id="Q6FJD5"/>
<dbReference type="FunCoup" id="Q6FJD5">
    <property type="interactions" value="616"/>
</dbReference>
<dbReference type="STRING" id="284593.Q6FJD5"/>
<dbReference type="EnsemblFungi" id="CAGL0M07161g-T">
    <property type="protein sequence ID" value="CAGL0M07161g-T-p1"/>
    <property type="gene ID" value="CAGL0M07161g"/>
</dbReference>
<dbReference type="GeneID" id="2891708"/>
<dbReference type="KEGG" id="cgr:2891708"/>
<dbReference type="CGD" id="CAL0137119">
    <property type="gene designation" value="EGD2"/>
</dbReference>
<dbReference type="VEuPathDB" id="FungiDB:B1J91_M07161g"/>
<dbReference type="VEuPathDB" id="FungiDB:CAGL0M07161g"/>
<dbReference type="eggNOG" id="KOG2239">
    <property type="taxonomic scope" value="Eukaryota"/>
</dbReference>
<dbReference type="HOGENOM" id="CLU_057806_2_1_1"/>
<dbReference type="InParanoid" id="Q6FJD5"/>
<dbReference type="OMA" id="SQKMIFA"/>
<dbReference type="Proteomes" id="UP000002428">
    <property type="component" value="Chromosome M"/>
</dbReference>
<dbReference type="GO" id="GO:0005576">
    <property type="term" value="C:extracellular region"/>
    <property type="evidence" value="ECO:0000314"/>
    <property type="project" value="CGD"/>
</dbReference>
<dbReference type="GO" id="GO:0062040">
    <property type="term" value="C:fungal biofilm matrix"/>
    <property type="evidence" value="ECO:0000314"/>
    <property type="project" value="CGD"/>
</dbReference>
<dbReference type="GO" id="GO:0005854">
    <property type="term" value="C:nascent polypeptide-associated complex"/>
    <property type="evidence" value="ECO:0007669"/>
    <property type="project" value="EnsemblFungi"/>
</dbReference>
<dbReference type="GO" id="GO:0005634">
    <property type="term" value="C:nucleus"/>
    <property type="evidence" value="ECO:0007669"/>
    <property type="project" value="UniProtKB-SubCell"/>
</dbReference>
<dbReference type="GO" id="GO:0070300">
    <property type="term" value="F:phosphatidic acid binding"/>
    <property type="evidence" value="ECO:0007669"/>
    <property type="project" value="EnsemblFungi"/>
</dbReference>
<dbReference type="GO" id="GO:0080025">
    <property type="term" value="F:phosphatidylinositol-3,5-bisphosphate binding"/>
    <property type="evidence" value="ECO:0007669"/>
    <property type="project" value="EnsemblFungi"/>
</dbReference>
<dbReference type="GO" id="GO:0032266">
    <property type="term" value="F:phosphatidylinositol-3-phosphate binding"/>
    <property type="evidence" value="ECO:0007669"/>
    <property type="project" value="EnsemblFungi"/>
</dbReference>
<dbReference type="GO" id="GO:0070273">
    <property type="term" value="F:phosphatidylinositol-4-phosphate binding"/>
    <property type="evidence" value="ECO:0007669"/>
    <property type="project" value="EnsemblFungi"/>
</dbReference>
<dbReference type="GO" id="GO:0051082">
    <property type="term" value="F:unfolded protein binding"/>
    <property type="evidence" value="ECO:0007669"/>
    <property type="project" value="EnsemblFungi"/>
</dbReference>
<dbReference type="GO" id="GO:0006613">
    <property type="term" value="P:cotranslational protein targeting to membrane"/>
    <property type="evidence" value="ECO:0007669"/>
    <property type="project" value="EnsemblFungi"/>
</dbReference>
<dbReference type="GO" id="GO:0015031">
    <property type="term" value="P:protein transport"/>
    <property type="evidence" value="ECO:0007669"/>
    <property type="project" value="UniProtKB-KW"/>
</dbReference>
<dbReference type="CDD" id="cd22054">
    <property type="entry name" value="NAC_NACA"/>
    <property type="match status" value="1"/>
</dbReference>
<dbReference type="CDD" id="cd14278">
    <property type="entry name" value="UBA_NAC_like"/>
    <property type="match status" value="1"/>
</dbReference>
<dbReference type="FunFam" id="2.20.70.30:FF:000002">
    <property type="entry name" value="Nascent polypeptide-associated complex (NAC), alpha subunit"/>
    <property type="match status" value="1"/>
</dbReference>
<dbReference type="Gene3D" id="1.10.8.10">
    <property type="entry name" value="DNA helicase RuvA subunit, C-terminal domain"/>
    <property type="match status" value="1"/>
</dbReference>
<dbReference type="Gene3D" id="2.20.70.30">
    <property type="entry name" value="Nascent polypeptide-associated complex domain"/>
    <property type="match status" value="1"/>
</dbReference>
<dbReference type="InterPro" id="IPR016641">
    <property type="entry name" value="EGD2/NACA0like"/>
</dbReference>
<dbReference type="InterPro" id="IPR044034">
    <property type="entry name" value="NAC-like_UBA"/>
</dbReference>
<dbReference type="InterPro" id="IPR038187">
    <property type="entry name" value="NAC_A/B_dom_sf"/>
</dbReference>
<dbReference type="InterPro" id="IPR002715">
    <property type="entry name" value="Nas_poly-pep-assoc_cplx_dom"/>
</dbReference>
<dbReference type="InterPro" id="IPR009060">
    <property type="entry name" value="UBA-like_sf"/>
</dbReference>
<dbReference type="PANTHER" id="PTHR21713">
    <property type="entry name" value="NASCENT POLYPEPTIDE ASSOCIATED COMPLEX ALPHA SUBUNIT-RELATED"/>
    <property type="match status" value="1"/>
</dbReference>
<dbReference type="Pfam" id="PF01849">
    <property type="entry name" value="NAC"/>
    <property type="match status" value="1"/>
</dbReference>
<dbReference type="Pfam" id="PF19026">
    <property type="entry name" value="UBA_HYPK"/>
    <property type="match status" value="1"/>
</dbReference>
<dbReference type="PIRSF" id="PIRSF015901">
    <property type="entry name" value="NAC_alpha"/>
    <property type="match status" value="1"/>
</dbReference>
<dbReference type="SMART" id="SM01407">
    <property type="entry name" value="NAC"/>
    <property type="match status" value="1"/>
</dbReference>
<dbReference type="SUPFAM" id="SSF46934">
    <property type="entry name" value="UBA-like"/>
    <property type="match status" value="1"/>
</dbReference>
<dbReference type="PROSITE" id="PS51151">
    <property type="entry name" value="NAC_AB"/>
    <property type="match status" value="1"/>
</dbReference>
<accession>Q6FJD5</accession>
<evidence type="ECO:0000250" key="1"/>
<evidence type="ECO:0000255" key="2">
    <source>
        <dbReference type="PROSITE-ProRule" id="PRU00507"/>
    </source>
</evidence>
<evidence type="ECO:0000305" key="3"/>
<gene>
    <name type="primary">EGD2</name>
    <name type="ordered locus">CAGL0M07161g</name>
</gene>
<keyword id="KW-0963">Cytoplasm</keyword>
<keyword id="KW-0539">Nucleus</keyword>
<keyword id="KW-0653">Protein transport</keyword>
<keyword id="KW-1185">Reference proteome</keyword>
<keyword id="KW-0813">Transport</keyword>
<reference key="1">
    <citation type="journal article" date="2004" name="Nature">
        <title>Genome evolution in yeasts.</title>
        <authorList>
            <person name="Dujon B."/>
            <person name="Sherman D."/>
            <person name="Fischer G."/>
            <person name="Durrens P."/>
            <person name="Casaregola S."/>
            <person name="Lafontaine I."/>
            <person name="de Montigny J."/>
            <person name="Marck C."/>
            <person name="Neuveglise C."/>
            <person name="Talla E."/>
            <person name="Goffard N."/>
            <person name="Frangeul L."/>
            <person name="Aigle M."/>
            <person name="Anthouard V."/>
            <person name="Babour A."/>
            <person name="Barbe V."/>
            <person name="Barnay S."/>
            <person name="Blanchin S."/>
            <person name="Beckerich J.-M."/>
            <person name="Beyne E."/>
            <person name="Bleykasten C."/>
            <person name="Boisrame A."/>
            <person name="Boyer J."/>
            <person name="Cattolico L."/>
            <person name="Confanioleri F."/>
            <person name="de Daruvar A."/>
            <person name="Despons L."/>
            <person name="Fabre E."/>
            <person name="Fairhead C."/>
            <person name="Ferry-Dumazet H."/>
            <person name="Groppi A."/>
            <person name="Hantraye F."/>
            <person name="Hennequin C."/>
            <person name="Jauniaux N."/>
            <person name="Joyet P."/>
            <person name="Kachouri R."/>
            <person name="Kerrest A."/>
            <person name="Koszul R."/>
            <person name="Lemaire M."/>
            <person name="Lesur I."/>
            <person name="Ma L."/>
            <person name="Muller H."/>
            <person name="Nicaud J.-M."/>
            <person name="Nikolski M."/>
            <person name="Oztas S."/>
            <person name="Ozier-Kalogeropoulos O."/>
            <person name="Pellenz S."/>
            <person name="Potier S."/>
            <person name="Richard G.-F."/>
            <person name="Straub M.-L."/>
            <person name="Suleau A."/>
            <person name="Swennen D."/>
            <person name="Tekaia F."/>
            <person name="Wesolowski-Louvel M."/>
            <person name="Westhof E."/>
            <person name="Wirth B."/>
            <person name="Zeniou-Meyer M."/>
            <person name="Zivanovic Y."/>
            <person name="Bolotin-Fukuhara M."/>
            <person name="Thierry A."/>
            <person name="Bouchier C."/>
            <person name="Caudron B."/>
            <person name="Scarpelli C."/>
            <person name="Gaillardin C."/>
            <person name="Weissenbach J."/>
            <person name="Wincker P."/>
            <person name="Souciet J.-L."/>
        </authorList>
    </citation>
    <scope>NUCLEOTIDE SEQUENCE [LARGE SCALE GENOMIC DNA]</scope>
    <source>
        <strain>ATCC 2001 / BCRC 20586 / JCM 3761 / NBRC 0622 / NRRL Y-65 / CBS 138</strain>
    </source>
</reference>
<proteinExistence type="inferred from homology"/>
<organism>
    <name type="scientific">Candida glabrata (strain ATCC 2001 / BCRC 20586 / JCM 3761 / NBRC 0622 / NRRL Y-65 / CBS 138)</name>
    <name type="common">Yeast</name>
    <name type="synonym">Nakaseomyces glabratus</name>
    <dbReference type="NCBI Taxonomy" id="284593"/>
    <lineage>
        <taxon>Eukaryota</taxon>
        <taxon>Fungi</taxon>
        <taxon>Dikarya</taxon>
        <taxon>Ascomycota</taxon>
        <taxon>Saccharomycotina</taxon>
        <taxon>Saccharomycetes</taxon>
        <taxon>Saccharomycetales</taxon>
        <taxon>Saccharomycetaceae</taxon>
        <taxon>Nakaseomyces</taxon>
    </lineage>
</organism>
<sequence length="165" mass="17894">MAEIPEGANVTILNRNEKKARELISKLGLKKVPGIIRVTFRKKDNQIFAIEKPEVFRSVGGNYVVFGEAKVDNFTQRLAAAQQQAQSQTATKTPEDIQADMQAAAVANENKTEGDAAEEDVDAGDLSNDDIDLVVQQTNATKGQAIKALKEHNGDIVNAIMSLSK</sequence>
<name>NACA_CANGA</name>
<comment type="function">
    <text evidence="1">Component of the nascent polypeptide-associated complex (NAC), a dynamic component of the ribosomal exit tunnel, protecting the emerging polypeptides from interaction with other cytoplasmic proteins to ensure appropriate nascent protein targeting. The NAC complex also promotes mitochondrial protein import by enhancing productive ribosome interactions with the outer mitochondrial membrane and blocks the inappropriate interaction of ribosomes translating non-secretory nascent polypeptides with translocation sites in the membrane of the endoplasmic reticulum. EGD2 may also be involved in transcription regulation (By similarity).</text>
</comment>
<comment type="subunit">
    <text evidence="1">Part of the nascent polypeptide-associated complex (NAC), consisting of EGD2 and EGD1. NAC associates with ribosomes via EGD1 (By similarity).</text>
</comment>
<comment type="subcellular location">
    <subcellularLocation>
        <location evidence="1">Cytoplasm</location>
    </subcellularLocation>
    <subcellularLocation>
        <location evidence="1">Nucleus</location>
    </subcellularLocation>
    <text evidence="1">Predominantly cytoplasmic, may also transiently localize to the nucleus.</text>
</comment>
<comment type="similarity">
    <text evidence="3">Belongs to the NAC-alpha family.</text>
</comment>
<protein>
    <recommendedName>
        <fullName>Nascent polypeptide-associated complex subunit alpha</fullName>
        <shortName>NAC-alpha</shortName>
    </recommendedName>
    <alternativeName>
        <fullName>Alpha-NAC</fullName>
    </alternativeName>
</protein>
<feature type="chain" id="PRO_0000273484" description="Nascent polypeptide-associated complex subunit alpha">
    <location>
        <begin position="1"/>
        <end position="165"/>
    </location>
</feature>
<feature type="domain" description="NAC-A/B" evidence="2">
    <location>
        <begin position="14"/>
        <end position="78"/>
    </location>
</feature>
<feature type="domain" description="UBA">
    <location>
        <begin position="126"/>
        <end position="165"/>
    </location>
</feature>